<comment type="function">
    <text evidence="1">Forms part of the ribosomal stalk which helps the ribosome interact with GTP-bound translation factors. Is thus essential for accurate translation.</text>
</comment>
<comment type="subunit">
    <text evidence="1">Homodimer. Part of the ribosomal stalk of the 50S ribosomal subunit. Forms a multimeric L10(L12)X complex, where L10 forms an elongated spine to which 2 to 4 L12 dimers bind in a sequential fashion. Binds GTP-bound translation factors.</text>
</comment>
<comment type="similarity">
    <text evidence="1">Belongs to the bacterial ribosomal protein bL12 family.</text>
</comment>
<feature type="chain" id="PRO_1000006969" description="Large ribosomal subunit protein bL12">
    <location>
        <begin position="1"/>
        <end position="124"/>
    </location>
</feature>
<keyword id="KW-0687">Ribonucleoprotein</keyword>
<keyword id="KW-0689">Ribosomal protein</keyword>
<gene>
    <name evidence="1" type="primary">rplL</name>
    <name type="ordered locus">Bcen2424_0339</name>
</gene>
<organism>
    <name type="scientific">Burkholderia cenocepacia (strain HI2424)</name>
    <dbReference type="NCBI Taxonomy" id="331272"/>
    <lineage>
        <taxon>Bacteria</taxon>
        <taxon>Pseudomonadati</taxon>
        <taxon>Pseudomonadota</taxon>
        <taxon>Betaproteobacteria</taxon>
        <taxon>Burkholderiales</taxon>
        <taxon>Burkholderiaceae</taxon>
        <taxon>Burkholderia</taxon>
        <taxon>Burkholderia cepacia complex</taxon>
    </lineage>
</organism>
<accession>A0K3L6</accession>
<reference key="1">
    <citation type="submission" date="2006-08" db="EMBL/GenBank/DDBJ databases">
        <title>Complete sequence of chromosome 1 of Burkholderia cenocepacia HI2424.</title>
        <authorList>
            <person name="Copeland A."/>
            <person name="Lucas S."/>
            <person name="Lapidus A."/>
            <person name="Barry K."/>
            <person name="Detter J.C."/>
            <person name="Glavina del Rio T."/>
            <person name="Hammon N."/>
            <person name="Israni S."/>
            <person name="Pitluck S."/>
            <person name="Chain P."/>
            <person name="Malfatti S."/>
            <person name="Shin M."/>
            <person name="Vergez L."/>
            <person name="Schmutz J."/>
            <person name="Larimer F."/>
            <person name="Land M."/>
            <person name="Hauser L."/>
            <person name="Kyrpides N."/>
            <person name="Kim E."/>
            <person name="LiPuma J.J."/>
            <person name="Gonzalez C.F."/>
            <person name="Konstantinidis K."/>
            <person name="Tiedje J.M."/>
            <person name="Richardson P."/>
        </authorList>
    </citation>
    <scope>NUCLEOTIDE SEQUENCE [LARGE SCALE GENOMIC DNA]</scope>
    <source>
        <strain>HI2424</strain>
    </source>
</reference>
<evidence type="ECO:0000255" key="1">
    <source>
        <dbReference type="HAMAP-Rule" id="MF_00368"/>
    </source>
</evidence>
<evidence type="ECO:0000305" key="2"/>
<sequence>MAIAKEDILAAVEGMTVLELNELVKAFEEKFGVSAAAVAVAGPAGGGAAAAAEEKTEFTVVLAEAGANKVSVIKAVRELTGLGLKEAKDLVDGAPKPVKEGVDKAAAEEAKKKLEEAGAKVEVK</sequence>
<protein>
    <recommendedName>
        <fullName evidence="1">Large ribosomal subunit protein bL12</fullName>
    </recommendedName>
    <alternativeName>
        <fullName evidence="2">50S ribosomal protein L7/L12</fullName>
    </alternativeName>
</protein>
<name>RL7_BURCH</name>
<proteinExistence type="inferred from homology"/>
<dbReference type="EMBL" id="CP000458">
    <property type="protein sequence ID" value="ABK07093.1"/>
    <property type="molecule type" value="Genomic_DNA"/>
</dbReference>
<dbReference type="RefSeq" id="WP_006477198.1">
    <property type="nucleotide sequence ID" value="NC_008542.1"/>
</dbReference>
<dbReference type="SMR" id="A0K3L6"/>
<dbReference type="GeneID" id="93051727"/>
<dbReference type="KEGG" id="bch:Bcen2424_0339"/>
<dbReference type="HOGENOM" id="CLU_086499_3_2_4"/>
<dbReference type="GO" id="GO:0022625">
    <property type="term" value="C:cytosolic large ribosomal subunit"/>
    <property type="evidence" value="ECO:0007669"/>
    <property type="project" value="TreeGrafter"/>
</dbReference>
<dbReference type="GO" id="GO:0003729">
    <property type="term" value="F:mRNA binding"/>
    <property type="evidence" value="ECO:0007669"/>
    <property type="project" value="TreeGrafter"/>
</dbReference>
<dbReference type="GO" id="GO:0003735">
    <property type="term" value="F:structural constituent of ribosome"/>
    <property type="evidence" value="ECO:0007669"/>
    <property type="project" value="InterPro"/>
</dbReference>
<dbReference type="GO" id="GO:0006412">
    <property type="term" value="P:translation"/>
    <property type="evidence" value="ECO:0007669"/>
    <property type="project" value="UniProtKB-UniRule"/>
</dbReference>
<dbReference type="CDD" id="cd00387">
    <property type="entry name" value="Ribosomal_L7_L12"/>
    <property type="match status" value="1"/>
</dbReference>
<dbReference type="FunFam" id="3.30.1390.10:FF:000001">
    <property type="entry name" value="50S ribosomal protein L7/L12"/>
    <property type="match status" value="1"/>
</dbReference>
<dbReference type="Gene3D" id="3.30.1390.10">
    <property type="match status" value="1"/>
</dbReference>
<dbReference type="Gene3D" id="1.20.5.710">
    <property type="entry name" value="Single helix bin"/>
    <property type="match status" value="1"/>
</dbReference>
<dbReference type="HAMAP" id="MF_00368">
    <property type="entry name" value="Ribosomal_bL12"/>
    <property type="match status" value="1"/>
</dbReference>
<dbReference type="InterPro" id="IPR000206">
    <property type="entry name" value="Ribosomal_bL12"/>
</dbReference>
<dbReference type="InterPro" id="IPR013823">
    <property type="entry name" value="Ribosomal_bL12_C"/>
</dbReference>
<dbReference type="InterPro" id="IPR014719">
    <property type="entry name" value="Ribosomal_bL12_C/ClpS-like"/>
</dbReference>
<dbReference type="InterPro" id="IPR008932">
    <property type="entry name" value="Ribosomal_bL12_oligo"/>
</dbReference>
<dbReference type="InterPro" id="IPR036235">
    <property type="entry name" value="Ribosomal_bL12_oligo_N_sf"/>
</dbReference>
<dbReference type="NCBIfam" id="TIGR00855">
    <property type="entry name" value="L12"/>
    <property type="match status" value="1"/>
</dbReference>
<dbReference type="PANTHER" id="PTHR45987">
    <property type="entry name" value="39S RIBOSOMAL PROTEIN L12"/>
    <property type="match status" value="1"/>
</dbReference>
<dbReference type="PANTHER" id="PTHR45987:SF4">
    <property type="entry name" value="LARGE RIBOSOMAL SUBUNIT PROTEIN BL12M"/>
    <property type="match status" value="1"/>
</dbReference>
<dbReference type="Pfam" id="PF00542">
    <property type="entry name" value="Ribosomal_L12"/>
    <property type="match status" value="1"/>
</dbReference>
<dbReference type="Pfam" id="PF16320">
    <property type="entry name" value="Ribosomal_L12_N"/>
    <property type="match status" value="1"/>
</dbReference>
<dbReference type="SUPFAM" id="SSF54736">
    <property type="entry name" value="ClpS-like"/>
    <property type="match status" value="1"/>
</dbReference>
<dbReference type="SUPFAM" id="SSF48300">
    <property type="entry name" value="Ribosomal protein L7/12, oligomerisation (N-terminal) domain"/>
    <property type="match status" value="1"/>
</dbReference>